<proteinExistence type="inferred from homology"/>
<protein>
    <recommendedName>
        <fullName evidence="3">O-acetyltransferase dmxR13</fullName>
        <ecNumber evidence="5">2.3.1.-</ecNumber>
    </recommendedName>
    <alternativeName>
        <fullName evidence="3">Dimeric xanthone biosynthesis cluster protein R13</fullName>
    </alternativeName>
</protein>
<evidence type="ECO:0000256" key="1">
    <source>
        <dbReference type="SAM" id="MobiDB-lite"/>
    </source>
</evidence>
<evidence type="ECO:0000269" key="2">
    <source>
    </source>
</evidence>
<evidence type="ECO:0000303" key="3">
    <source>
    </source>
</evidence>
<evidence type="ECO:0000305" key="4"/>
<evidence type="ECO:0000305" key="5">
    <source>
    </source>
</evidence>
<name>DMR13_CRYX8</name>
<reference key="1">
    <citation type="journal article" date="2019" name="Chem. Sci.">
        <title>Structure revision of cryptosporioptides and determination of the genetic basis for dimeric xanthone biosynthesis in fungi.</title>
        <authorList>
            <person name="Greco C."/>
            <person name="de Mattos-Shipley K."/>
            <person name="Bailey A.M."/>
            <person name="Mulholland N.P."/>
            <person name="Vincent J.L."/>
            <person name="Willis C.L."/>
            <person name="Cox R.J."/>
            <person name="Simpson T.J."/>
        </authorList>
    </citation>
    <scope>NUCLEOTIDE SEQUENCE [GENOMIC DNA]</scope>
    <scope>FUNCTION</scope>
    <scope>DISRUPTION PHENOTYPE</scope>
    <scope>PATHWAY</scope>
    <source>
        <strain>8999</strain>
    </source>
</reference>
<gene>
    <name evidence="3" type="primary">dmxR13</name>
</gene>
<organism>
    <name type="scientific">Cryptosporiopsis sp. (strain 8999)</name>
    <dbReference type="NCBI Taxonomy" id="2572248"/>
    <lineage>
        <taxon>Eukaryota</taxon>
        <taxon>Fungi</taxon>
        <taxon>Dikarya</taxon>
        <taxon>Ascomycota</taxon>
        <taxon>Pezizomycotina</taxon>
        <taxon>Leotiomycetes</taxon>
        <taxon>Helotiales</taxon>
        <taxon>Dermateaceae</taxon>
        <taxon>Cryptosporiopsis</taxon>
    </lineage>
</organism>
<sequence>MGSAIDFDLDGHLDILGQQPLLQMYTQICFAFPVADSSSYSAITKTLADGLERLSASFPWVAGHIVNEDSGEGNTGVFKIKPLDKSPSLIVKDFRNDPSFPTMEAIKKAGFPFSMLNEDIIAPRKTLPVRSDTPEISPVLVVQADLITGGLLLVFAGQHNAMDMTGQGQVIHLFSKACRNEPFTSDELVSGNLDRRTLVPLLDDSYKQGHELARQISQPRPPPSSDGPPPPKLDWTYILFSPTSLAELKSLAQKTITFPSSFISTDDTLSAFVWQAVARSRLPRFDASAKTTCARAVDVRSYLGVPSTYTGLLQNVTYDTFTLQKLVNEPLGSVASALRSGLDPKRPNDLGFSTRALVTVLSRTLDKNTFSFGGTVNPSLDFMVSSWAKLDSYELDFGLGLGKPEGVRRPQFQPLESLGFLMPKTQDGEIAFALCLMEEDMKRLRADEEFTKYGVFVG</sequence>
<keyword id="KW-0012">Acyltransferase</keyword>
<keyword id="KW-0808">Transferase</keyword>
<dbReference type="EC" id="2.3.1.-" evidence="5"/>
<dbReference type="EMBL" id="MK182094">
    <property type="protein sequence ID" value="QCL09104.1"/>
    <property type="molecule type" value="Genomic_DNA"/>
</dbReference>
<dbReference type="SMR" id="A0A4V1DXC4"/>
<dbReference type="GO" id="GO:0016746">
    <property type="term" value="F:acyltransferase activity"/>
    <property type="evidence" value="ECO:0007669"/>
    <property type="project" value="UniProtKB-KW"/>
</dbReference>
<dbReference type="Gene3D" id="3.30.559.10">
    <property type="entry name" value="Chloramphenicol acetyltransferase-like domain"/>
    <property type="match status" value="2"/>
</dbReference>
<dbReference type="InterPro" id="IPR023213">
    <property type="entry name" value="CAT-like_dom_sf"/>
</dbReference>
<dbReference type="InterPro" id="IPR051283">
    <property type="entry name" value="Sec_Metabolite_Acyltrans"/>
</dbReference>
<dbReference type="InterPro" id="IPR054710">
    <property type="entry name" value="Tri101-like_N"/>
</dbReference>
<dbReference type="PANTHER" id="PTHR31896">
    <property type="entry name" value="FAMILY REGULATORY PROTEIN, PUTATIVE (AFU_ORTHOLOGUE AFUA_3G14730)-RELATED"/>
    <property type="match status" value="1"/>
</dbReference>
<dbReference type="PANTHER" id="PTHR31896:SF64">
    <property type="entry name" value="TRICHOTHECENE 3-O-ACETYLTRANSFERASE"/>
    <property type="match status" value="1"/>
</dbReference>
<dbReference type="Pfam" id="PF22664">
    <property type="entry name" value="TRI-like_N"/>
    <property type="match status" value="1"/>
</dbReference>
<accession>A0A4V1DXC4</accession>
<feature type="chain" id="PRO_0000453514" description="O-acetyltransferase dmxR13">
    <location>
        <begin position="1"/>
        <end position="458"/>
    </location>
</feature>
<feature type="region of interest" description="Disordered" evidence="1">
    <location>
        <begin position="211"/>
        <end position="231"/>
    </location>
</feature>
<feature type="compositionally biased region" description="Pro residues" evidence="1">
    <location>
        <begin position="219"/>
        <end position="231"/>
    </location>
</feature>
<comment type="function">
    <text evidence="2 5">O-acetyltransferase; part of the gene cluster that mediates the biosynthesis of the dimeric xanthones cryptosporioptides (PubMed:30996871). The pathway begins with the synthesis of atrochrysone thioester by the polyketide synthase dmx-nrPKS (Probable). The atrochrysone carboxyl ACP thioesterase dmxR1 then breaks the thioester bond and releases the atrochrysone carboxylic acid from dmx-nrPKS (Probable). Atrochrysone carboxylic acid is decarboxylated by the decarboxylase dmxR15, and oxidized by the anthrone oxygenase dmxR16 to yield emodin (Probable). Emodin is then reduced to emodin hydroquinone by the oxidoreductase dmxR7 (Probable). A-ring reduction by the short chain dehydrogenase dmxR18, dehydration by the scytalone dehydratase-like protein dmxR17 and probable spontaneous re-oxidation, results in overall deoxygenation to chrysophanol (PubMed:30996871). Baeyer-Villiger oxidation by the Baeyer-Villiger monooxygenase (BVMO) dmxR6 then yields monodictylactone in equilibrium with monodictyphenone (PubMed:30996871). In the case of the cryptosporioptides biosynthesis, monodictylactone is reduced at C-12 to an alcohol (by the short chain dehydrogenases dmxR12 or dmxR8) and hydroxylated at C-5 by dmxR9, yielding the electron-rich aromatic which could eliminate H(2)O to form the ortho-quinonemethide, followed by tautomerisation to paraquinone and complete the formal reduction to produce the 10-methylgroup (Probable). Conjugate addition of C-4a-OH to the resulting paraquinone by the monooxygenase dmxR10 then gives cyclohexadienone, which is then reduced at C-5 by the short chain dehydrogenase dmxR3 to give the dihydroxanthone (Probable). The 6,7-epoxide in the cryptosporioptides could be introduced by the cytochrome P450 monooxygenase dmxL3 (Probable). The highly reducing PKS dmxL2 manufactures butyrate, which is further carboxylated by dmxL1 to form ethylmalonate (PubMed:30996871). It is not yet clear whether the carboxylation occurs while the butyrate is attached to the ACP of dmxL2, but this unusual fungal metabolite could then be esterified to O-5 by the O-acetyltransferase dmxR13 (PubMed:30996871). Finally, dimerization performed by dmxR5 gives the observed dimers cryptosporioptides A, B and C as the final products of the pathway (PubMed:30996871).</text>
</comment>
<comment type="pathway">
    <text evidence="2">Secondary metabolite biosynthesis.</text>
</comment>
<comment type="disruption phenotype">
    <text evidence="2">Abolished production of cryptosprioptide C and D, but retains the production of cryptosporioptide A, however, in smaller quantities.</text>
</comment>
<comment type="similarity">
    <text evidence="4">Belongs to the trichothecene 3-O-acetyltransferase family.</text>
</comment>